<gene>
    <name evidence="1" type="primary">aroA</name>
    <name type="ordered locus">ECS88_0936</name>
</gene>
<reference key="1">
    <citation type="journal article" date="2009" name="PLoS Genet.">
        <title>Organised genome dynamics in the Escherichia coli species results in highly diverse adaptive paths.</title>
        <authorList>
            <person name="Touchon M."/>
            <person name="Hoede C."/>
            <person name="Tenaillon O."/>
            <person name="Barbe V."/>
            <person name="Baeriswyl S."/>
            <person name="Bidet P."/>
            <person name="Bingen E."/>
            <person name="Bonacorsi S."/>
            <person name="Bouchier C."/>
            <person name="Bouvet O."/>
            <person name="Calteau A."/>
            <person name="Chiapello H."/>
            <person name="Clermont O."/>
            <person name="Cruveiller S."/>
            <person name="Danchin A."/>
            <person name="Diard M."/>
            <person name="Dossat C."/>
            <person name="Karoui M.E."/>
            <person name="Frapy E."/>
            <person name="Garry L."/>
            <person name="Ghigo J.M."/>
            <person name="Gilles A.M."/>
            <person name="Johnson J."/>
            <person name="Le Bouguenec C."/>
            <person name="Lescat M."/>
            <person name="Mangenot S."/>
            <person name="Martinez-Jehanne V."/>
            <person name="Matic I."/>
            <person name="Nassif X."/>
            <person name="Oztas S."/>
            <person name="Petit M.A."/>
            <person name="Pichon C."/>
            <person name="Rouy Z."/>
            <person name="Ruf C.S."/>
            <person name="Schneider D."/>
            <person name="Tourret J."/>
            <person name="Vacherie B."/>
            <person name="Vallenet D."/>
            <person name="Medigue C."/>
            <person name="Rocha E.P.C."/>
            <person name="Denamur E."/>
        </authorList>
    </citation>
    <scope>NUCLEOTIDE SEQUENCE [LARGE SCALE GENOMIC DNA]</scope>
    <source>
        <strain>S88 / ExPEC</strain>
    </source>
</reference>
<name>AROA_ECO45</name>
<evidence type="ECO:0000255" key="1">
    <source>
        <dbReference type="HAMAP-Rule" id="MF_00210"/>
    </source>
</evidence>
<dbReference type="EC" id="2.5.1.19" evidence="1"/>
<dbReference type="EMBL" id="CU928161">
    <property type="protein sequence ID" value="CAR02268.1"/>
    <property type="molecule type" value="Genomic_DNA"/>
</dbReference>
<dbReference type="RefSeq" id="WP_000445244.1">
    <property type="nucleotide sequence ID" value="NC_011742.1"/>
</dbReference>
<dbReference type="SMR" id="B7MHL7"/>
<dbReference type="KEGG" id="ecz:ECS88_0936"/>
<dbReference type="HOGENOM" id="CLU_024321_0_0_6"/>
<dbReference type="UniPathway" id="UPA00053">
    <property type="reaction ID" value="UER00089"/>
</dbReference>
<dbReference type="Proteomes" id="UP000000747">
    <property type="component" value="Chromosome"/>
</dbReference>
<dbReference type="GO" id="GO:0005737">
    <property type="term" value="C:cytoplasm"/>
    <property type="evidence" value="ECO:0007669"/>
    <property type="project" value="UniProtKB-SubCell"/>
</dbReference>
<dbReference type="GO" id="GO:0003866">
    <property type="term" value="F:3-phosphoshikimate 1-carboxyvinyltransferase activity"/>
    <property type="evidence" value="ECO:0007669"/>
    <property type="project" value="UniProtKB-UniRule"/>
</dbReference>
<dbReference type="GO" id="GO:0008652">
    <property type="term" value="P:amino acid biosynthetic process"/>
    <property type="evidence" value="ECO:0007669"/>
    <property type="project" value="UniProtKB-KW"/>
</dbReference>
<dbReference type="GO" id="GO:0009073">
    <property type="term" value="P:aromatic amino acid family biosynthetic process"/>
    <property type="evidence" value="ECO:0007669"/>
    <property type="project" value="UniProtKB-KW"/>
</dbReference>
<dbReference type="GO" id="GO:0009423">
    <property type="term" value="P:chorismate biosynthetic process"/>
    <property type="evidence" value="ECO:0007669"/>
    <property type="project" value="UniProtKB-UniRule"/>
</dbReference>
<dbReference type="CDD" id="cd01554">
    <property type="entry name" value="EPT-like"/>
    <property type="match status" value="1"/>
</dbReference>
<dbReference type="FunFam" id="3.65.10.10:FF:000003">
    <property type="entry name" value="3-phosphoshikimate 1-carboxyvinyltransferase"/>
    <property type="match status" value="1"/>
</dbReference>
<dbReference type="FunFam" id="3.65.10.10:FF:000004">
    <property type="entry name" value="3-phosphoshikimate 1-carboxyvinyltransferase"/>
    <property type="match status" value="1"/>
</dbReference>
<dbReference type="Gene3D" id="3.65.10.10">
    <property type="entry name" value="Enolpyruvate transferase domain"/>
    <property type="match status" value="2"/>
</dbReference>
<dbReference type="HAMAP" id="MF_00210">
    <property type="entry name" value="EPSP_synth"/>
    <property type="match status" value="1"/>
</dbReference>
<dbReference type="InterPro" id="IPR001986">
    <property type="entry name" value="Enolpyruvate_Tfrase_dom"/>
</dbReference>
<dbReference type="InterPro" id="IPR036968">
    <property type="entry name" value="Enolpyruvate_Tfrase_sf"/>
</dbReference>
<dbReference type="InterPro" id="IPR006264">
    <property type="entry name" value="EPSP_synthase"/>
</dbReference>
<dbReference type="InterPro" id="IPR023193">
    <property type="entry name" value="EPSP_synthase_CS"/>
</dbReference>
<dbReference type="InterPro" id="IPR013792">
    <property type="entry name" value="RNA3'P_cycl/enolpyr_Trfase_a/b"/>
</dbReference>
<dbReference type="NCBIfam" id="TIGR01356">
    <property type="entry name" value="aroA"/>
    <property type="match status" value="1"/>
</dbReference>
<dbReference type="PANTHER" id="PTHR21090">
    <property type="entry name" value="AROM/DEHYDROQUINATE SYNTHASE"/>
    <property type="match status" value="1"/>
</dbReference>
<dbReference type="PANTHER" id="PTHR21090:SF5">
    <property type="entry name" value="PENTAFUNCTIONAL AROM POLYPEPTIDE"/>
    <property type="match status" value="1"/>
</dbReference>
<dbReference type="Pfam" id="PF00275">
    <property type="entry name" value="EPSP_synthase"/>
    <property type="match status" value="1"/>
</dbReference>
<dbReference type="PIRSF" id="PIRSF000505">
    <property type="entry name" value="EPSPS"/>
    <property type="match status" value="1"/>
</dbReference>
<dbReference type="SUPFAM" id="SSF55205">
    <property type="entry name" value="EPT/RTPC-like"/>
    <property type="match status" value="1"/>
</dbReference>
<dbReference type="PROSITE" id="PS00104">
    <property type="entry name" value="EPSP_SYNTHASE_1"/>
    <property type="match status" value="1"/>
</dbReference>
<dbReference type="PROSITE" id="PS00885">
    <property type="entry name" value="EPSP_SYNTHASE_2"/>
    <property type="match status" value="1"/>
</dbReference>
<protein>
    <recommendedName>
        <fullName evidence="1">3-phosphoshikimate 1-carboxyvinyltransferase</fullName>
        <ecNumber evidence="1">2.5.1.19</ecNumber>
    </recommendedName>
    <alternativeName>
        <fullName evidence="1">5-enolpyruvylshikimate-3-phosphate synthase</fullName>
        <shortName evidence="1">EPSP synthase</shortName>
        <shortName evidence="1">EPSPS</shortName>
    </alternativeName>
</protein>
<organism>
    <name type="scientific">Escherichia coli O45:K1 (strain S88 / ExPEC)</name>
    <dbReference type="NCBI Taxonomy" id="585035"/>
    <lineage>
        <taxon>Bacteria</taxon>
        <taxon>Pseudomonadati</taxon>
        <taxon>Pseudomonadota</taxon>
        <taxon>Gammaproteobacteria</taxon>
        <taxon>Enterobacterales</taxon>
        <taxon>Enterobacteriaceae</taxon>
        <taxon>Escherichia</taxon>
    </lineage>
</organism>
<sequence length="427" mass="46222">MESLTLQPIARVDGTINLPGSKSVSNRALLLAALAHGKTVLTNLLDSDDVRHMLNALTALGVSYTLSADRTRCEIIGNGGPLHAESARELFLGNAGTAMRPLAAALCLGSNDIVLTGEPRMKERPIGHLVDALRQGGAKITYLEQENYPPLRLQGGFTGGNVDVDGSVSSQFLTALLMTAPLAPEDTVIRIKGDLVSKPYIDITLNLMKTFGVEIENQHYQQFVVKGGQSYQSPGTYLVEGDASSASYFLAAAAIRGGTVKVTGIGRNSMQGDIRFADVLEKMGATICWGDDYISCTRGELNAIDMDMNHIPDAAMTIATAALFAKGTTTLRNIYNWRVKETDRLFAMATELRKVGAEVEEGHDFIRITPPEKLKFAEIATYNDHRMAMCFSLVALSDTPVTILDPKCTAKTFPDYFEQLARISQPG</sequence>
<keyword id="KW-0028">Amino-acid biosynthesis</keyword>
<keyword id="KW-0057">Aromatic amino acid biosynthesis</keyword>
<keyword id="KW-0963">Cytoplasm</keyword>
<keyword id="KW-1185">Reference proteome</keyword>
<keyword id="KW-0808">Transferase</keyword>
<comment type="function">
    <text evidence="1">Catalyzes the transfer of the enolpyruvyl moiety of phosphoenolpyruvate (PEP) to the 5-hydroxyl of shikimate-3-phosphate (S3P) to produce enolpyruvyl shikimate-3-phosphate and inorganic phosphate.</text>
</comment>
<comment type="catalytic activity">
    <reaction evidence="1">
        <text>3-phosphoshikimate + phosphoenolpyruvate = 5-O-(1-carboxyvinyl)-3-phosphoshikimate + phosphate</text>
        <dbReference type="Rhea" id="RHEA:21256"/>
        <dbReference type="ChEBI" id="CHEBI:43474"/>
        <dbReference type="ChEBI" id="CHEBI:57701"/>
        <dbReference type="ChEBI" id="CHEBI:58702"/>
        <dbReference type="ChEBI" id="CHEBI:145989"/>
        <dbReference type="EC" id="2.5.1.19"/>
    </reaction>
    <physiologicalReaction direction="left-to-right" evidence="1">
        <dbReference type="Rhea" id="RHEA:21257"/>
    </physiologicalReaction>
</comment>
<comment type="pathway">
    <text evidence="1">Metabolic intermediate biosynthesis; chorismate biosynthesis; chorismate from D-erythrose 4-phosphate and phosphoenolpyruvate: step 6/7.</text>
</comment>
<comment type="subunit">
    <text evidence="1">Monomer.</text>
</comment>
<comment type="subcellular location">
    <subcellularLocation>
        <location evidence="1">Cytoplasm</location>
    </subcellularLocation>
</comment>
<comment type="similarity">
    <text evidence="1">Belongs to the EPSP synthase family.</text>
</comment>
<accession>B7MHL7</accession>
<feature type="chain" id="PRO_1000118781" description="3-phosphoshikimate 1-carboxyvinyltransferase">
    <location>
        <begin position="1"/>
        <end position="427"/>
    </location>
</feature>
<feature type="active site" description="Proton acceptor" evidence="1">
    <location>
        <position position="313"/>
    </location>
</feature>
<feature type="binding site" evidence="1">
    <location>
        <position position="22"/>
    </location>
    <ligand>
        <name>3-phosphoshikimate</name>
        <dbReference type="ChEBI" id="CHEBI:145989"/>
    </ligand>
</feature>
<feature type="binding site" evidence="1">
    <location>
        <position position="22"/>
    </location>
    <ligand>
        <name>phosphoenolpyruvate</name>
        <dbReference type="ChEBI" id="CHEBI:58702"/>
    </ligand>
</feature>
<feature type="binding site" evidence="1">
    <location>
        <position position="23"/>
    </location>
    <ligand>
        <name>3-phosphoshikimate</name>
        <dbReference type="ChEBI" id="CHEBI:145989"/>
    </ligand>
</feature>
<feature type="binding site" evidence="1">
    <location>
        <position position="27"/>
    </location>
    <ligand>
        <name>3-phosphoshikimate</name>
        <dbReference type="ChEBI" id="CHEBI:145989"/>
    </ligand>
</feature>
<feature type="binding site" evidence="1">
    <location>
        <position position="96"/>
    </location>
    <ligand>
        <name>phosphoenolpyruvate</name>
        <dbReference type="ChEBI" id="CHEBI:58702"/>
    </ligand>
</feature>
<feature type="binding site" evidence="1">
    <location>
        <position position="124"/>
    </location>
    <ligand>
        <name>phosphoenolpyruvate</name>
        <dbReference type="ChEBI" id="CHEBI:58702"/>
    </ligand>
</feature>
<feature type="binding site" evidence="1">
    <location>
        <position position="169"/>
    </location>
    <ligand>
        <name>3-phosphoshikimate</name>
        <dbReference type="ChEBI" id="CHEBI:145989"/>
    </ligand>
</feature>
<feature type="binding site" evidence="1">
    <location>
        <position position="170"/>
    </location>
    <ligand>
        <name>3-phosphoshikimate</name>
        <dbReference type="ChEBI" id="CHEBI:145989"/>
    </ligand>
</feature>
<feature type="binding site" evidence="1">
    <location>
        <position position="171"/>
    </location>
    <ligand>
        <name>3-phosphoshikimate</name>
        <dbReference type="ChEBI" id="CHEBI:145989"/>
    </ligand>
</feature>
<feature type="binding site" evidence="1">
    <location>
        <position position="171"/>
    </location>
    <ligand>
        <name>phosphoenolpyruvate</name>
        <dbReference type="ChEBI" id="CHEBI:58702"/>
    </ligand>
</feature>
<feature type="binding site" evidence="1">
    <location>
        <position position="197"/>
    </location>
    <ligand>
        <name>3-phosphoshikimate</name>
        <dbReference type="ChEBI" id="CHEBI:145989"/>
    </ligand>
</feature>
<feature type="binding site" evidence="1">
    <location>
        <position position="313"/>
    </location>
    <ligand>
        <name>3-phosphoshikimate</name>
        <dbReference type="ChEBI" id="CHEBI:145989"/>
    </ligand>
</feature>
<feature type="binding site" evidence="1">
    <location>
        <position position="336"/>
    </location>
    <ligand>
        <name>3-phosphoshikimate</name>
        <dbReference type="ChEBI" id="CHEBI:145989"/>
    </ligand>
</feature>
<feature type="binding site" evidence="1">
    <location>
        <position position="340"/>
    </location>
    <ligand>
        <name>3-phosphoshikimate</name>
        <dbReference type="ChEBI" id="CHEBI:145989"/>
    </ligand>
</feature>
<feature type="binding site" evidence="1">
    <location>
        <position position="344"/>
    </location>
    <ligand>
        <name>phosphoenolpyruvate</name>
        <dbReference type="ChEBI" id="CHEBI:58702"/>
    </ligand>
</feature>
<feature type="binding site" evidence="1">
    <location>
        <position position="386"/>
    </location>
    <ligand>
        <name>phosphoenolpyruvate</name>
        <dbReference type="ChEBI" id="CHEBI:58702"/>
    </ligand>
</feature>
<feature type="binding site" evidence="1">
    <location>
        <position position="411"/>
    </location>
    <ligand>
        <name>phosphoenolpyruvate</name>
        <dbReference type="ChEBI" id="CHEBI:58702"/>
    </ligand>
</feature>
<proteinExistence type="inferred from homology"/>